<accession>B0RMW5</accession>
<keyword id="KW-0223">Dioxygenase</keyword>
<keyword id="KW-0349">Heme</keyword>
<keyword id="KW-0408">Iron</keyword>
<keyword id="KW-0479">Metal-binding</keyword>
<keyword id="KW-0560">Oxidoreductase</keyword>
<keyword id="KW-0823">Tryptophan catabolism</keyword>
<comment type="function">
    <text evidence="1">Heme-dependent dioxygenase that catalyzes the oxidative cleavage of the L-tryptophan (L-Trp) pyrrole ring and converts L-tryptophan to N-formyl-L-kynurenine. Catalyzes the oxidative cleavage of the indole moiety.</text>
</comment>
<comment type="catalytic activity">
    <reaction evidence="1">
        <text>L-tryptophan + O2 = N-formyl-L-kynurenine</text>
        <dbReference type="Rhea" id="RHEA:24536"/>
        <dbReference type="ChEBI" id="CHEBI:15379"/>
        <dbReference type="ChEBI" id="CHEBI:57912"/>
        <dbReference type="ChEBI" id="CHEBI:58629"/>
        <dbReference type="EC" id="1.13.11.11"/>
    </reaction>
</comment>
<comment type="cofactor">
    <cofactor evidence="1">
        <name>heme</name>
        <dbReference type="ChEBI" id="CHEBI:30413"/>
    </cofactor>
    <text evidence="1">Binds 1 heme group per subunit.</text>
</comment>
<comment type="pathway">
    <text evidence="1">Amino-acid degradation; L-tryptophan degradation via kynurenine pathway; L-kynurenine from L-tryptophan: step 1/2.</text>
</comment>
<comment type="subunit">
    <text evidence="1">Homotetramer.</text>
</comment>
<comment type="similarity">
    <text evidence="1">Belongs to the tryptophan 2,3-dioxygenase family.</text>
</comment>
<proteinExistence type="inferred from homology"/>
<reference key="1">
    <citation type="journal article" date="2008" name="J. Biotechnol.">
        <title>The genome of Xanthomonas campestris pv. campestris B100 and its use for the reconstruction of metabolic pathways involved in xanthan biosynthesis.</title>
        <authorList>
            <person name="Vorhoelter F.-J."/>
            <person name="Schneiker S."/>
            <person name="Goesmann A."/>
            <person name="Krause L."/>
            <person name="Bekel T."/>
            <person name="Kaiser O."/>
            <person name="Linke B."/>
            <person name="Patschkowski T."/>
            <person name="Rueckert C."/>
            <person name="Schmid J."/>
            <person name="Sidhu V.K."/>
            <person name="Sieber V."/>
            <person name="Tauch A."/>
            <person name="Watt S.A."/>
            <person name="Weisshaar B."/>
            <person name="Becker A."/>
            <person name="Niehaus K."/>
            <person name="Puehler A."/>
        </authorList>
    </citation>
    <scope>NUCLEOTIDE SEQUENCE [LARGE SCALE GENOMIC DNA]</scope>
    <source>
        <strain>B100</strain>
    </source>
</reference>
<organism>
    <name type="scientific">Xanthomonas campestris pv. campestris (strain B100)</name>
    <dbReference type="NCBI Taxonomy" id="509169"/>
    <lineage>
        <taxon>Bacteria</taxon>
        <taxon>Pseudomonadati</taxon>
        <taxon>Pseudomonadota</taxon>
        <taxon>Gammaproteobacteria</taxon>
        <taxon>Lysobacterales</taxon>
        <taxon>Lysobacteraceae</taxon>
        <taxon>Xanthomonas</taxon>
    </lineage>
</organism>
<name>T23O_XANCB</name>
<sequence>MPVDKNLRDLEPGIHTDLEGRLTYGGYLRLDQLLSAQQPLSEPAHHDEMLFIIQHQTSELWLKLLAHELRAAIVHLQRDEVWQCRKVLARSKQVLRQLTEQWSVLETLTPSEYMGFRDVLGPSSGFQSLQYRYIEFLLGNKNPQMLQVFAYDPAGQARLREVLEAPSLYEEFLRYLARFGHAIPQQYQARDWTAAHVADDTLRPVFERIYENTDRYWREYSLCEDLVDVETQFQLWRFRHMRTVMRVIGFKRGTGGSSGVGFLQQALALTFFPELFDVRTSVGVDNRPPQGSADAGKR</sequence>
<dbReference type="EC" id="1.13.11.11" evidence="1"/>
<dbReference type="EMBL" id="AM920689">
    <property type="protein sequence ID" value="CAP49800.1"/>
    <property type="molecule type" value="Genomic_DNA"/>
</dbReference>
<dbReference type="SMR" id="B0RMW5"/>
<dbReference type="KEGG" id="xca:xcc-b100_0466"/>
<dbReference type="HOGENOM" id="CLU_063240_0_0_6"/>
<dbReference type="UniPathway" id="UPA00333">
    <property type="reaction ID" value="UER00453"/>
</dbReference>
<dbReference type="Proteomes" id="UP000001188">
    <property type="component" value="Chromosome"/>
</dbReference>
<dbReference type="GO" id="GO:0020037">
    <property type="term" value="F:heme binding"/>
    <property type="evidence" value="ECO:0000250"/>
    <property type="project" value="UniProtKB"/>
</dbReference>
<dbReference type="GO" id="GO:0046872">
    <property type="term" value="F:metal ion binding"/>
    <property type="evidence" value="ECO:0007669"/>
    <property type="project" value="UniProtKB-KW"/>
</dbReference>
<dbReference type="GO" id="GO:0004833">
    <property type="term" value="F:tryptophan 2,3-dioxygenase activity"/>
    <property type="evidence" value="ECO:0000250"/>
    <property type="project" value="UniProtKB"/>
</dbReference>
<dbReference type="GO" id="GO:0019442">
    <property type="term" value="P:L-tryptophan catabolic process to acetyl-CoA"/>
    <property type="evidence" value="ECO:0007669"/>
    <property type="project" value="TreeGrafter"/>
</dbReference>
<dbReference type="GO" id="GO:0019441">
    <property type="term" value="P:L-tryptophan catabolic process to kynurenine"/>
    <property type="evidence" value="ECO:0000250"/>
    <property type="project" value="UniProtKB"/>
</dbReference>
<dbReference type="FunFam" id="1.20.58.480:FF:000001">
    <property type="entry name" value="Tryptophan 2,3-dioxygenase"/>
    <property type="match status" value="1"/>
</dbReference>
<dbReference type="Gene3D" id="1.20.58.480">
    <property type="match status" value="1"/>
</dbReference>
<dbReference type="HAMAP" id="MF_01972">
    <property type="entry name" value="T23O"/>
    <property type="match status" value="1"/>
</dbReference>
<dbReference type="InterPro" id="IPR037217">
    <property type="entry name" value="Trp/Indoleamine_2_3_dOase-like"/>
</dbReference>
<dbReference type="InterPro" id="IPR004981">
    <property type="entry name" value="Trp_2_3_dOase"/>
</dbReference>
<dbReference type="PANTHER" id="PTHR10138">
    <property type="entry name" value="TRYPTOPHAN 2,3-DIOXYGENASE"/>
    <property type="match status" value="1"/>
</dbReference>
<dbReference type="PANTHER" id="PTHR10138:SF0">
    <property type="entry name" value="TRYPTOPHAN 2,3-DIOXYGENASE"/>
    <property type="match status" value="1"/>
</dbReference>
<dbReference type="Pfam" id="PF03301">
    <property type="entry name" value="Trp_dioxygenase"/>
    <property type="match status" value="2"/>
</dbReference>
<dbReference type="SUPFAM" id="SSF140959">
    <property type="entry name" value="Indolic compounds 2,3-dioxygenase-like"/>
    <property type="match status" value="1"/>
</dbReference>
<protein>
    <recommendedName>
        <fullName evidence="1">Tryptophan 2,3-dioxygenase</fullName>
        <shortName evidence="1">TDO</shortName>
        <ecNumber evidence="1">1.13.11.11</ecNumber>
    </recommendedName>
    <alternativeName>
        <fullName evidence="1">Tryptamin 2,3-dioxygenase</fullName>
    </alternativeName>
    <alternativeName>
        <fullName evidence="1">Tryptophan oxygenase</fullName>
        <shortName evidence="1">TO</shortName>
        <shortName evidence="1">TRPO</shortName>
    </alternativeName>
    <alternativeName>
        <fullName evidence="1">Tryptophan pyrrolase</fullName>
    </alternativeName>
    <alternativeName>
        <fullName evidence="1">Tryptophanase</fullName>
    </alternativeName>
</protein>
<gene>
    <name evidence="1" type="primary">kynA</name>
    <name type="ordered locus">xcc-b100_0466</name>
</gene>
<feature type="chain" id="PRO_0000360142" description="Tryptophan 2,3-dioxygenase">
    <location>
        <begin position="1"/>
        <end position="298"/>
    </location>
</feature>
<feature type="binding site" evidence="1">
    <location>
        <begin position="51"/>
        <end position="55"/>
    </location>
    <ligand>
        <name>substrate</name>
    </ligand>
</feature>
<feature type="binding site" evidence="1">
    <location>
        <position position="113"/>
    </location>
    <ligand>
        <name>substrate</name>
    </ligand>
</feature>
<feature type="binding site" evidence="1">
    <location>
        <position position="117"/>
    </location>
    <ligand>
        <name>substrate</name>
    </ligand>
</feature>
<feature type="binding site" description="axial binding residue" evidence="1">
    <location>
        <position position="240"/>
    </location>
    <ligand>
        <name>heme</name>
        <dbReference type="ChEBI" id="CHEBI:30413"/>
    </ligand>
    <ligandPart>
        <name>Fe</name>
        <dbReference type="ChEBI" id="CHEBI:18248"/>
    </ligandPart>
</feature>
<feature type="binding site" evidence="1">
    <location>
        <position position="254"/>
    </location>
    <ligand>
        <name>substrate</name>
    </ligand>
</feature>
<evidence type="ECO:0000255" key="1">
    <source>
        <dbReference type="HAMAP-Rule" id="MF_01972"/>
    </source>
</evidence>